<protein>
    <recommendedName>
        <fullName>Mediator of RNA polymerase II transcription subunit 31</fullName>
    </recommendedName>
    <alternativeName>
        <fullName>Hpr1 suppressor protein 1</fullName>
    </alternativeName>
    <alternativeName>
        <fullName>Mediator complex subunit 31</fullName>
    </alternativeName>
</protein>
<proteinExistence type="evidence at protein level"/>
<reference key="1">
    <citation type="journal article" date="1994" name="Genetics">
        <title>Characterization of mutations that suppress the temperature-sensitive growth of the hpr1 delta mutant of Saccharomyces cerevisiae.</title>
        <authorList>
            <person name="Fan H.-Y."/>
            <person name="Klein H.L."/>
        </authorList>
    </citation>
    <scope>NUCLEOTIDE SEQUENCE [GENOMIC DNA]</scope>
    <source>
        <strain>ATCC 200060 / W303</strain>
    </source>
</reference>
<reference key="2">
    <citation type="journal article" date="1996" name="Yeast">
        <title>Sequence analysis of a 10 kb DNA fragment from yeast chromosome VII reveals a novel member of the DnaJ family.</title>
        <authorList>
            <person name="Rodriguez-Belmonte E."/>
            <person name="Rodriguez Torres A.M."/>
            <person name="Tizon B."/>
            <person name="Cadahia J.L."/>
            <person name="Gonzalez-Siso I."/>
            <person name="Ramil E."/>
            <person name="Becerra M."/>
            <person name="Gonzalez-Dominguez M."/>
            <person name="Cerdan E."/>
        </authorList>
    </citation>
    <scope>NUCLEOTIDE SEQUENCE [GENOMIC DNA]</scope>
</reference>
<reference key="3">
    <citation type="journal article" date="1997" name="Nature">
        <title>The nucleotide sequence of Saccharomyces cerevisiae chromosome VII.</title>
        <authorList>
            <person name="Tettelin H."/>
            <person name="Agostoni-Carbone M.L."/>
            <person name="Albermann K."/>
            <person name="Albers M."/>
            <person name="Arroyo J."/>
            <person name="Backes U."/>
            <person name="Barreiros T."/>
            <person name="Bertani I."/>
            <person name="Bjourson A.J."/>
            <person name="Brueckner M."/>
            <person name="Bruschi C.V."/>
            <person name="Carignani G."/>
            <person name="Castagnoli L."/>
            <person name="Cerdan E."/>
            <person name="Clemente M.L."/>
            <person name="Coblenz A."/>
            <person name="Coglievina M."/>
            <person name="Coissac E."/>
            <person name="Defoor E."/>
            <person name="Del Bino S."/>
            <person name="Delius H."/>
            <person name="Delneri D."/>
            <person name="de Wergifosse P."/>
            <person name="Dujon B."/>
            <person name="Durand P."/>
            <person name="Entian K.-D."/>
            <person name="Eraso P."/>
            <person name="Escribano V."/>
            <person name="Fabiani L."/>
            <person name="Fartmann B."/>
            <person name="Feroli F."/>
            <person name="Feuermann M."/>
            <person name="Frontali L."/>
            <person name="Garcia-Gonzalez M."/>
            <person name="Garcia-Saez M.I."/>
            <person name="Goffeau A."/>
            <person name="Guerreiro P."/>
            <person name="Hani J."/>
            <person name="Hansen M."/>
            <person name="Hebling U."/>
            <person name="Hernandez K."/>
            <person name="Heumann K."/>
            <person name="Hilger F."/>
            <person name="Hofmann B."/>
            <person name="Indge K.J."/>
            <person name="James C.M."/>
            <person name="Klima R."/>
            <person name="Koetter P."/>
            <person name="Kramer B."/>
            <person name="Kramer W."/>
            <person name="Lauquin G."/>
            <person name="Leuther H."/>
            <person name="Louis E.J."/>
            <person name="Maillier E."/>
            <person name="Marconi A."/>
            <person name="Martegani E."/>
            <person name="Mazon M.J."/>
            <person name="Mazzoni C."/>
            <person name="McReynolds A.D.K."/>
            <person name="Melchioretto P."/>
            <person name="Mewes H.-W."/>
            <person name="Minenkova O."/>
            <person name="Mueller-Auer S."/>
            <person name="Nawrocki A."/>
            <person name="Netter P."/>
            <person name="Neu R."/>
            <person name="Nombela C."/>
            <person name="Oliver S.G."/>
            <person name="Panzeri L."/>
            <person name="Paoluzi S."/>
            <person name="Plevani P."/>
            <person name="Portetelle D."/>
            <person name="Portillo F."/>
            <person name="Potier S."/>
            <person name="Purnelle B."/>
            <person name="Rieger M."/>
            <person name="Riles L."/>
            <person name="Rinaldi T."/>
            <person name="Robben J."/>
            <person name="Rodrigues-Pousada C."/>
            <person name="Rodriguez-Belmonte E."/>
            <person name="Rodriguez-Torres A.M."/>
            <person name="Rose M."/>
            <person name="Ruzzi M."/>
            <person name="Saliola M."/>
            <person name="Sanchez-Perez M."/>
            <person name="Schaefer B."/>
            <person name="Schaefer M."/>
            <person name="Scharfe M."/>
            <person name="Schmidheini T."/>
            <person name="Schreer A."/>
            <person name="Skala J."/>
            <person name="Souciet J.-L."/>
            <person name="Steensma H.Y."/>
            <person name="Talla E."/>
            <person name="Thierry A."/>
            <person name="Vandenbol M."/>
            <person name="van der Aart Q.J.M."/>
            <person name="Van Dyck L."/>
            <person name="Vanoni M."/>
            <person name="Verhasselt P."/>
            <person name="Voet M."/>
            <person name="Volckaert G."/>
            <person name="Wambutt R."/>
            <person name="Watson M.D."/>
            <person name="Weber N."/>
            <person name="Wedler E."/>
            <person name="Wedler H."/>
            <person name="Wipfli P."/>
            <person name="Wolf K."/>
            <person name="Wright L.F."/>
            <person name="Zaccaria P."/>
            <person name="Zimmermann M."/>
            <person name="Zollner A."/>
            <person name="Kleine K."/>
        </authorList>
    </citation>
    <scope>NUCLEOTIDE SEQUENCE [LARGE SCALE GENOMIC DNA]</scope>
    <source>
        <strain>ATCC 204508 / S288c</strain>
    </source>
</reference>
<reference key="4">
    <citation type="journal article" date="2014" name="G3 (Bethesda)">
        <title>The reference genome sequence of Saccharomyces cerevisiae: Then and now.</title>
        <authorList>
            <person name="Engel S.R."/>
            <person name="Dietrich F.S."/>
            <person name="Fisk D.G."/>
            <person name="Binkley G."/>
            <person name="Balakrishnan R."/>
            <person name="Costanzo M.C."/>
            <person name="Dwight S.S."/>
            <person name="Hitz B.C."/>
            <person name="Karra K."/>
            <person name="Nash R.S."/>
            <person name="Weng S."/>
            <person name="Wong E.D."/>
            <person name="Lloyd P."/>
            <person name="Skrzypek M.S."/>
            <person name="Miyasato S.R."/>
            <person name="Simison M."/>
            <person name="Cherry J.M."/>
        </authorList>
    </citation>
    <scope>GENOME REANNOTATION</scope>
    <source>
        <strain>ATCC 204508 / S288c</strain>
    </source>
</reference>
<reference key="5">
    <citation type="journal article" date="2007" name="Genome Res.">
        <title>Approaching a complete repository of sequence-verified protein-encoding clones for Saccharomyces cerevisiae.</title>
        <authorList>
            <person name="Hu Y."/>
            <person name="Rolfs A."/>
            <person name="Bhullar B."/>
            <person name="Murthy T.V.S."/>
            <person name="Zhu C."/>
            <person name="Berger M.F."/>
            <person name="Camargo A.A."/>
            <person name="Kelley F."/>
            <person name="McCarron S."/>
            <person name="Jepson D."/>
            <person name="Richardson A."/>
            <person name="Raphael J."/>
            <person name="Moreira D."/>
            <person name="Taycher E."/>
            <person name="Zuo D."/>
            <person name="Mohr S."/>
            <person name="Kane M.F."/>
            <person name="Williamson J."/>
            <person name="Simpson A.J.G."/>
            <person name="Bulyk M.L."/>
            <person name="Harlow E."/>
            <person name="Marsischky G."/>
            <person name="Kolodner R.D."/>
            <person name="LaBaer J."/>
        </authorList>
    </citation>
    <scope>NUCLEOTIDE SEQUENCE [GENOMIC DNA]</scope>
    <source>
        <strain>ATCC 204508 / S288c</strain>
    </source>
</reference>
<reference key="6">
    <citation type="journal article" date="2003" name="Nature">
        <title>Global analysis of protein localization in budding yeast.</title>
        <authorList>
            <person name="Huh W.-K."/>
            <person name="Falvo J.V."/>
            <person name="Gerke L.C."/>
            <person name="Carroll A.S."/>
            <person name="Howson R.W."/>
            <person name="Weissman J.S."/>
            <person name="O'Shea E.K."/>
        </authorList>
    </citation>
    <scope>SUBCELLULAR LOCATION [LARGE SCALE ANALYSIS]</scope>
</reference>
<reference key="7">
    <citation type="journal article" date="2003" name="Nature">
        <title>Global analysis of protein expression in yeast.</title>
        <authorList>
            <person name="Ghaemmaghami S."/>
            <person name="Huh W.-K."/>
            <person name="Bower K."/>
            <person name="Howson R.W."/>
            <person name="Belle A."/>
            <person name="Dephoure N."/>
            <person name="O'Shea E.K."/>
            <person name="Weissman J.S."/>
        </authorList>
    </citation>
    <scope>LEVEL OF PROTEIN EXPRESSION [LARGE SCALE ANALYSIS]</scope>
</reference>
<reference key="8">
    <citation type="journal article" date="2004" name="J. Biol. Chem.">
        <title>The Soh1/MED31 protein is an ancient component of Schizosaccharomyces pombe and Saccharomyces cerevisiae Mediator.</title>
        <authorList>
            <person name="Linder T."/>
            <person name="Gustafsson C.M."/>
        </authorList>
    </citation>
    <scope>COMPONENT OF MEDIATOR COMPLEX</scope>
</reference>
<reference key="9">
    <citation type="journal article" date="2004" name="Mol. Cell">
        <title>A unified nomenclature for protein subunits of mediator complexes linking transcriptional regulators to RNA polymerase II.</title>
        <authorList>
            <person name="Bourbon H.-M."/>
            <person name="Aguilera A."/>
            <person name="Ansari A.Z."/>
            <person name="Asturias F.J."/>
            <person name="Berk A.J."/>
            <person name="Bjoerklund S."/>
            <person name="Blackwell T.K."/>
            <person name="Borggrefe T."/>
            <person name="Carey M."/>
            <person name="Carlson M."/>
            <person name="Conaway J.W."/>
            <person name="Conaway R.C."/>
            <person name="Emmons S.W."/>
            <person name="Fondell J.D."/>
            <person name="Freedman L.P."/>
            <person name="Fukasawa T."/>
            <person name="Gustafsson C.M."/>
            <person name="Han M."/>
            <person name="He X."/>
            <person name="Herman P.K."/>
            <person name="Hinnebusch A.G."/>
            <person name="Holmberg S."/>
            <person name="Holstege F.C.P."/>
            <person name="Jaehning J.A."/>
            <person name="Kim Y.-J."/>
            <person name="Kuras L."/>
            <person name="Leutz A."/>
            <person name="Lis J.T."/>
            <person name="Meisterernest M."/>
            <person name="Naeaer A.M."/>
            <person name="Nasmyth K."/>
            <person name="Parvin J.D."/>
            <person name="Ptashne M."/>
            <person name="Reinberg D."/>
            <person name="Ronne H."/>
            <person name="Sadowski I."/>
            <person name="Sakurai H."/>
            <person name="Sipiczki M."/>
            <person name="Sternberg P.W."/>
            <person name="Stillman D.J."/>
            <person name="Strich R."/>
            <person name="Struhl K."/>
            <person name="Svejstrup J.Q."/>
            <person name="Tuck S."/>
            <person name="Winston F."/>
            <person name="Roeder R.G."/>
            <person name="Kornberg R.D."/>
        </authorList>
    </citation>
    <scope>NOMENCLATURE</scope>
</reference>
<reference key="10">
    <citation type="journal article" date="2004" name="Nucleic Acids Res.">
        <title>A high resolution protein interaction map of the yeast Mediator complex.</title>
        <authorList>
            <person name="Guglielmi B."/>
            <person name="van Berkum N.L."/>
            <person name="Klapholz B."/>
            <person name="Bijma T."/>
            <person name="Boube M."/>
            <person name="Boschiero C."/>
            <person name="Bourbon H.-M."/>
            <person name="Holstege F.C.P."/>
            <person name="Werner M."/>
        </authorList>
    </citation>
    <scope>TOPOLOGY OF THE MEDIATOR COMPLEX</scope>
</reference>
<reference key="11">
    <citation type="journal article" date="2005" name="J. Biol. Chem.">
        <title>Preponderance of free mediator in the yeast Saccharomyces cerevisiae.</title>
        <authorList>
            <person name="Takagi Y."/>
            <person name="Chadick J.Z."/>
            <person name="Davis J.A."/>
            <person name="Asturias F.J."/>
        </authorList>
    </citation>
    <scope>CHARACTERIZATION OF THE MEDIATOR COMPLEX</scope>
</reference>
<reference key="12">
    <citation type="journal article" date="2005" name="J. Biol. Chem.">
        <title>Mediator and TFIIH govern carboxyl-terminal domain-dependent transcription in yeast extracts.</title>
        <authorList>
            <person name="Nair D."/>
            <person name="Kim Y."/>
            <person name="Myers L.C."/>
        </authorList>
    </citation>
    <scope>FUNCTION OF THE MEDIATOR COMPLEX</scope>
</reference>
<reference key="13">
    <citation type="journal article" date="2005" name="Mol. Cell">
        <title>Mediator expression profiling epistasis reveals a signal transduction pathway with antagonistic submodules and highly specific downstream targets.</title>
        <authorList>
            <person name="van de Peppel J."/>
            <person name="Kettelarij N."/>
            <person name="van Bakel H."/>
            <person name="Kockelkorn T.T.J.P."/>
            <person name="van Leenen D."/>
            <person name="Holstege F.C.P."/>
        </authorList>
    </citation>
    <scope>FUNCTION</scope>
</reference>
<reference key="14">
    <citation type="journal article" date="2006" name="J. Biol. Chem.">
        <title>Mediator as a general transcription factor.</title>
        <authorList>
            <person name="Takagi Y."/>
            <person name="Kornberg R.D."/>
        </authorList>
    </citation>
    <scope>FUNCTION OF THE MEDIATOR COMPLEX</scope>
</reference>
<reference key="15">
    <citation type="journal article" date="2002" name="Mol. Cell">
        <title>Structure of the yeast RNA polymerase II holoenzyme: mediator conformation and polymerase interaction.</title>
        <authorList>
            <person name="Davis J.A."/>
            <person name="Takagi Y."/>
            <person name="Kornberg R.D."/>
            <person name="Asturias F.J."/>
        </authorList>
    </citation>
    <scope>ELECTRON MICROSCOPY OF MEDIATOR COMPLEX IN COMPLEX WITH RNA POLYMERASE II</scope>
</reference>
<name>MED31_YEAST</name>
<comment type="function">
    <text evidence="3 4 5">Component of the Mediator complex, a coactivator involved in the regulated transcription of nearly all RNA polymerase II-dependent genes. Mediator functions as a bridge to convey information from gene-specific regulatory proteins to the basal RNA polymerase II transcription machinery. The Mediator complex, having a compact conformation in its free form, is recruited to promoters by direct interactions with regulatory proteins and serves for the assembly of a functional preinitiation complex with RNA polymerase II and the general transcription factors. The Mediator complex unfolds to an extended conformation and partially surrounds RNA polymerase II, specifically interacting with the unphosphorylated form of the C-terminal domain (CTD) of RNA polymerase II. The Mediator complex dissociates from the RNA polymerase II holoenzyme and stays at the promoter when transcriptional elongation begins.</text>
</comment>
<comment type="subunit">
    <text>Component of the Mediator complex, which is composed of at least 21 subunits that form three structurally distinct submodules. The Mediator head module contains MED6, MED8, MED11, SRB4/MED17, SRB5/MED18, ROX3/MED19, SRB2/MED20 and SRB6/MED22, the middle module contains MED1, MED4, NUT1/MED5, MED7, CSE2/MED9, NUT2/MED10, SRB7/MED21 and SOH1/MED31, and the tail module contains MED2, PGD1/MED3, RGR1/MED14, GAL11/MED15 and SIN4/MED16. The head and the middle modules interact directly with RNA polymerase II, whereas the elongated tail module interacts with gene-specific regulatory proteins.</text>
</comment>
<comment type="interaction">
    <interactant intactId="EBI-17658">
        <id>P38633</id>
    </interactant>
    <interactant intactId="EBI-32854">
        <id>Q12321</id>
        <label>MED1</label>
    </interactant>
    <organismsDiffer>false</organismsDiffer>
    <experiments>3</experiments>
</comment>
<comment type="interaction">
    <interactant intactId="EBI-17658">
        <id>P38633</id>
    </interactant>
    <interactant intactId="EBI-12414">
        <id>Q06213</id>
        <label>NUT2</label>
    </interactant>
    <organismsDiffer>false</organismsDiffer>
    <experiments>4</experiments>
</comment>
<comment type="interaction">
    <interactant intactId="EBI-17658">
        <id>P38633</id>
    </interactant>
    <interactant intactId="EBI-18025">
        <id>P32569</id>
        <label>SRB4</label>
    </interactant>
    <organismsDiffer>false</organismsDiffer>
    <experiments>5</experiments>
</comment>
<comment type="interaction">
    <interactant intactId="EBI-17658">
        <id>P38633</id>
    </interactant>
    <interactant intactId="EBI-18046">
        <id>P47822</id>
        <label>SRB7</label>
    </interactant>
    <organismsDiffer>false</organismsDiffer>
    <experiments>4</experiments>
</comment>
<comment type="subcellular location">
    <subcellularLocation>
        <location evidence="1">Nucleus</location>
    </subcellularLocation>
</comment>
<comment type="miscellaneous">
    <text evidence="2">Present with 468 molecules/cell in log phase SD medium.</text>
</comment>
<comment type="similarity">
    <text evidence="6">Belongs to the Mediator complex subunit 31 family.</text>
</comment>
<organism>
    <name type="scientific">Saccharomyces cerevisiae (strain ATCC 204508 / S288c)</name>
    <name type="common">Baker's yeast</name>
    <dbReference type="NCBI Taxonomy" id="559292"/>
    <lineage>
        <taxon>Eukaryota</taxon>
        <taxon>Fungi</taxon>
        <taxon>Dikarya</taxon>
        <taxon>Ascomycota</taxon>
        <taxon>Saccharomycotina</taxon>
        <taxon>Saccharomycetes</taxon>
        <taxon>Saccharomycetales</taxon>
        <taxon>Saccharomycetaceae</taxon>
        <taxon>Saccharomyces</taxon>
    </lineage>
</organism>
<sequence>MSSTNGNAPATPSSDQNPLPTRFEVELEFIQSLANIQYVTYLLTQQQIWKSPNFKNYLKYLEYWCNPPYSQCIVYPNCLFILKLLNGFMESAIVNEDGLLEGLDELPKIIQLQGPQWMNEMVERWAN</sequence>
<gene>
    <name type="primary">SOH1</name>
    <name type="synonym">MED31</name>
    <name type="ordered locus">YGL127C</name>
    <name type="ORF">G2864</name>
</gene>
<accession>P38633</accession>
<accession>D6VU21</accession>
<evidence type="ECO:0000269" key="1">
    <source>
    </source>
</evidence>
<evidence type="ECO:0000269" key="2">
    <source>
    </source>
</evidence>
<evidence type="ECO:0000269" key="3">
    <source>
    </source>
</evidence>
<evidence type="ECO:0000269" key="4">
    <source>
    </source>
</evidence>
<evidence type="ECO:0000269" key="5">
    <source>
    </source>
</evidence>
<evidence type="ECO:0000305" key="6"/>
<evidence type="ECO:0007829" key="7">
    <source>
        <dbReference type="PDB" id="3FBI"/>
    </source>
</evidence>
<keyword id="KW-0002">3D-structure</keyword>
<keyword id="KW-0010">Activator</keyword>
<keyword id="KW-0539">Nucleus</keyword>
<keyword id="KW-1185">Reference proteome</keyword>
<keyword id="KW-0804">Transcription</keyword>
<keyword id="KW-0805">Transcription regulation</keyword>
<feature type="chain" id="PRO_0000212534" description="Mediator of RNA polymerase II transcription subunit 31">
    <location>
        <begin position="1"/>
        <end position="127"/>
    </location>
</feature>
<feature type="helix" evidence="7">
    <location>
        <begin position="22"/>
        <end position="32"/>
    </location>
</feature>
<feature type="helix" evidence="7">
    <location>
        <begin position="36"/>
        <end position="43"/>
    </location>
</feature>
<feature type="helix" evidence="7">
    <location>
        <begin position="47"/>
        <end position="49"/>
    </location>
</feature>
<feature type="helix" evidence="7">
    <location>
        <begin position="53"/>
        <end position="60"/>
    </location>
</feature>
<feature type="helix" evidence="7">
    <location>
        <begin position="61"/>
        <end position="65"/>
    </location>
</feature>
<feature type="helix" evidence="7">
    <location>
        <begin position="69"/>
        <end position="72"/>
    </location>
</feature>
<feature type="helix" evidence="7">
    <location>
        <begin position="77"/>
        <end position="91"/>
    </location>
</feature>
<feature type="strand" evidence="7">
    <location>
        <begin position="96"/>
        <end position="98"/>
    </location>
</feature>
<feature type="helix" evidence="7">
    <location>
        <begin position="101"/>
        <end position="103"/>
    </location>
</feature>
<dbReference type="EMBL" id="L31921">
    <property type="protein sequence ID" value="AAA35066.1"/>
    <property type="molecule type" value="Genomic_DNA"/>
</dbReference>
<dbReference type="EMBL" id="X87252">
    <property type="protein sequence ID" value="CAA60704.1"/>
    <property type="molecule type" value="Genomic_DNA"/>
</dbReference>
<dbReference type="EMBL" id="Z72649">
    <property type="protein sequence ID" value="CAA96836.1"/>
    <property type="molecule type" value="Genomic_DNA"/>
</dbReference>
<dbReference type="EMBL" id="AY693006">
    <property type="protein sequence ID" value="AAT93025.1"/>
    <property type="molecule type" value="Genomic_DNA"/>
</dbReference>
<dbReference type="EMBL" id="BK006941">
    <property type="protein sequence ID" value="DAA07982.1"/>
    <property type="molecule type" value="Genomic_DNA"/>
</dbReference>
<dbReference type="PIR" id="S47895">
    <property type="entry name" value="S47895"/>
</dbReference>
<dbReference type="RefSeq" id="NP_011388.1">
    <property type="nucleotide sequence ID" value="NM_001180992.1"/>
</dbReference>
<dbReference type="PDB" id="3FBI">
    <property type="method" value="X-ray"/>
    <property type="resolution" value="2.80 A"/>
    <property type="chains" value="B/D=1-127"/>
</dbReference>
<dbReference type="PDB" id="3FBN">
    <property type="method" value="X-ray"/>
    <property type="resolution" value="3.01 A"/>
    <property type="chains" value="B/D=1-127"/>
</dbReference>
<dbReference type="PDB" id="5OQM">
    <property type="method" value="EM"/>
    <property type="resolution" value="5.80 A"/>
    <property type="chains" value="o=1-127"/>
</dbReference>
<dbReference type="PDB" id="5SVA">
    <property type="method" value="EM"/>
    <property type="resolution" value="15.30 A"/>
    <property type="chains" value="X=1-127"/>
</dbReference>
<dbReference type="PDB" id="7UI9">
    <property type="method" value="EM"/>
    <property type="resolution" value="3.30 A"/>
    <property type="chains" value="w=1-127"/>
</dbReference>
<dbReference type="PDB" id="7UIF">
    <property type="method" value="EM"/>
    <property type="resolution" value="4.60 A"/>
    <property type="chains" value="w=1-127"/>
</dbReference>
<dbReference type="PDB" id="7UIG">
    <property type="method" value="EM"/>
    <property type="resolution" value="4.30 A"/>
    <property type="chains" value="w=1-127"/>
</dbReference>
<dbReference type="PDB" id="7UIO">
    <property type="method" value="EM"/>
    <property type="resolution" value="3.30 A"/>
    <property type="chains" value="Aw/Bw=1-127"/>
</dbReference>
<dbReference type="PDB" id="8CEN">
    <property type="method" value="EM"/>
    <property type="resolution" value="3.00 A"/>
    <property type="chains" value="o=1-127"/>
</dbReference>
<dbReference type="PDB" id="8CEO">
    <property type="method" value="EM"/>
    <property type="resolution" value="3.60 A"/>
    <property type="chains" value="o=1-127"/>
</dbReference>
<dbReference type="PDBsum" id="3FBI"/>
<dbReference type="PDBsum" id="3FBN"/>
<dbReference type="PDBsum" id="5OQM"/>
<dbReference type="PDBsum" id="5SVA"/>
<dbReference type="PDBsum" id="7UI9"/>
<dbReference type="PDBsum" id="7UIF"/>
<dbReference type="PDBsum" id="7UIG"/>
<dbReference type="PDBsum" id="7UIO"/>
<dbReference type="PDBsum" id="8CEN"/>
<dbReference type="PDBsum" id="8CEO"/>
<dbReference type="EMDB" id="EMD-26542"/>
<dbReference type="EMDB" id="EMD-26544"/>
<dbReference type="EMDB" id="EMD-26545"/>
<dbReference type="EMDB" id="EMD-26551"/>
<dbReference type="EMDB" id="EMD-2786"/>
<dbReference type="EMDB" id="EMD-3850"/>
<dbReference type="EMDB" id="EMD-8305"/>
<dbReference type="SMR" id="P38633"/>
<dbReference type="BioGRID" id="33124">
    <property type="interactions" value="364"/>
</dbReference>
<dbReference type="ComplexPortal" id="CPX-3226">
    <property type="entry name" value="Core mediator complex"/>
</dbReference>
<dbReference type="DIP" id="DIP-1179N"/>
<dbReference type="FunCoup" id="P38633">
    <property type="interactions" value="167"/>
</dbReference>
<dbReference type="IntAct" id="P38633">
    <property type="interactions" value="34"/>
</dbReference>
<dbReference type="MINT" id="P38633"/>
<dbReference type="STRING" id="4932.YGL127C"/>
<dbReference type="GlyGen" id="P38633">
    <property type="glycosylation" value="1 site"/>
</dbReference>
<dbReference type="iPTMnet" id="P38633"/>
<dbReference type="PaxDb" id="4932-YGL127C"/>
<dbReference type="PeptideAtlas" id="P38633"/>
<dbReference type="EnsemblFungi" id="YGL127C_mRNA">
    <property type="protein sequence ID" value="YGL127C"/>
    <property type="gene ID" value="YGL127C"/>
</dbReference>
<dbReference type="GeneID" id="852750"/>
<dbReference type="KEGG" id="sce:YGL127C"/>
<dbReference type="AGR" id="SGD:S000003095"/>
<dbReference type="SGD" id="S000003095">
    <property type="gene designation" value="SOH1"/>
</dbReference>
<dbReference type="VEuPathDB" id="FungiDB:YGL127C"/>
<dbReference type="eggNOG" id="KOG4086">
    <property type="taxonomic scope" value="Eukaryota"/>
</dbReference>
<dbReference type="GeneTree" id="ENSGT00390000015531"/>
<dbReference type="HOGENOM" id="CLU_147521_0_0_1"/>
<dbReference type="InParanoid" id="P38633"/>
<dbReference type="OMA" id="YLEYWCE"/>
<dbReference type="OrthoDB" id="10257739at2759"/>
<dbReference type="BioCyc" id="YEAST:G3O-30623-MONOMER"/>
<dbReference type="BioGRID-ORCS" id="852750">
    <property type="hits" value="5 hits in 10 CRISPR screens"/>
</dbReference>
<dbReference type="EvolutionaryTrace" id="P38633"/>
<dbReference type="PRO" id="PR:P38633"/>
<dbReference type="Proteomes" id="UP000002311">
    <property type="component" value="Chromosome VII"/>
</dbReference>
<dbReference type="RNAct" id="P38633">
    <property type="molecule type" value="protein"/>
</dbReference>
<dbReference type="GO" id="GO:0070847">
    <property type="term" value="C:core mediator complex"/>
    <property type="evidence" value="ECO:0000314"/>
    <property type="project" value="SGD"/>
</dbReference>
<dbReference type="GO" id="GO:0016592">
    <property type="term" value="C:mediator complex"/>
    <property type="evidence" value="ECO:0000318"/>
    <property type="project" value="GO_Central"/>
</dbReference>
<dbReference type="GO" id="GO:0005634">
    <property type="term" value="C:nucleus"/>
    <property type="evidence" value="ECO:0000314"/>
    <property type="project" value="ComplexPortal"/>
</dbReference>
<dbReference type="GO" id="GO:0003713">
    <property type="term" value="F:transcription coactivator activity"/>
    <property type="evidence" value="ECO:0000314"/>
    <property type="project" value="SGD"/>
</dbReference>
<dbReference type="GO" id="GO:0006310">
    <property type="term" value="P:DNA recombination"/>
    <property type="evidence" value="ECO:0000315"/>
    <property type="project" value="SGD"/>
</dbReference>
<dbReference type="GO" id="GO:0006281">
    <property type="term" value="P:DNA repair"/>
    <property type="evidence" value="ECO:0000353"/>
    <property type="project" value="SGD"/>
</dbReference>
<dbReference type="GO" id="GO:0006311">
    <property type="term" value="P:meiotic gene conversion"/>
    <property type="evidence" value="ECO:0000315"/>
    <property type="project" value="SGD"/>
</dbReference>
<dbReference type="GO" id="GO:0032968">
    <property type="term" value="P:positive regulation of transcription elongation by RNA polymerase II"/>
    <property type="evidence" value="ECO:0000314"/>
    <property type="project" value="ComplexPortal"/>
</dbReference>
<dbReference type="GO" id="GO:0060261">
    <property type="term" value="P:positive regulation of transcription initiation by RNA polymerase II"/>
    <property type="evidence" value="ECO:0000314"/>
    <property type="project" value="ComplexPortal"/>
</dbReference>
<dbReference type="GO" id="GO:0006357">
    <property type="term" value="P:regulation of transcription by RNA polymerase II"/>
    <property type="evidence" value="ECO:0000318"/>
    <property type="project" value="GO_Central"/>
</dbReference>
<dbReference type="GO" id="GO:0051123">
    <property type="term" value="P:RNA polymerase II preinitiation complex assembly"/>
    <property type="evidence" value="ECO:0000314"/>
    <property type="project" value="ComplexPortal"/>
</dbReference>
<dbReference type="GO" id="GO:0006366">
    <property type="term" value="P:transcription by RNA polymerase II"/>
    <property type="evidence" value="ECO:0000314"/>
    <property type="project" value="SGD"/>
</dbReference>
<dbReference type="FunFam" id="1.10.10.1340:FF:000004">
    <property type="entry name" value="Mediator of RNA polymerase II transcription subunit 31"/>
    <property type="match status" value="1"/>
</dbReference>
<dbReference type="Gene3D" id="1.10.10.1340">
    <property type="entry name" value="Mediator of RNA polymerase II, submodule Med31 (Soh1)"/>
    <property type="match status" value="1"/>
</dbReference>
<dbReference type="InterPro" id="IPR038089">
    <property type="entry name" value="Med31_sf"/>
</dbReference>
<dbReference type="InterPro" id="IPR008831">
    <property type="entry name" value="Mediator_Med31"/>
</dbReference>
<dbReference type="PANTHER" id="PTHR13186">
    <property type="entry name" value="MEDIATOR OF RNA POLYMERASE II TRANSCRIPTION SUBUNIT 31"/>
    <property type="match status" value="1"/>
</dbReference>
<dbReference type="Pfam" id="PF05669">
    <property type="entry name" value="Med31"/>
    <property type="match status" value="1"/>
</dbReference>